<protein>
    <recommendedName>
        <fullName evidence="1">Ion-translocating oxidoreductase complex subunit A</fullName>
        <ecNumber evidence="1">7.-.-.-</ecNumber>
    </recommendedName>
    <alternativeName>
        <fullName evidence="1">Rsx electron transport complex subunit A</fullName>
    </alternativeName>
</protein>
<organism>
    <name type="scientific">Escherichia coli O6:K15:H31 (strain 536 / UPEC)</name>
    <dbReference type="NCBI Taxonomy" id="362663"/>
    <lineage>
        <taxon>Bacteria</taxon>
        <taxon>Pseudomonadati</taxon>
        <taxon>Pseudomonadota</taxon>
        <taxon>Gammaproteobacteria</taxon>
        <taxon>Enterobacterales</taxon>
        <taxon>Enterobacteriaceae</taxon>
        <taxon>Escherichia</taxon>
    </lineage>
</organism>
<dbReference type="EC" id="7.-.-.-" evidence="1"/>
<dbReference type="EMBL" id="CP000247">
    <property type="protein sequence ID" value="ABG69579.1"/>
    <property type="molecule type" value="Genomic_DNA"/>
</dbReference>
<dbReference type="RefSeq" id="WP_000133193.1">
    <property type="nucleotide sequence ID" value="NC_008253.1"/>
</dbReference>
<dbReference type="SMR" id="Q0THK0"/>
<dbReference type="GeneID" id="89516393"/>
<dbReference type="KEGG" id="ecp:ECP_1572"/>
<dbReference type="HOGENOM" id="CLU_095255_1_0_6"/>
<dbReference type="Proteomes" id="UP000009182">
    <property type="component" value="Chromosome"/>
</dbReference>
<dbReference type="GO" id="GO:0005886">
    <property type="term" value="C:plasma membrane"/>
    <property type="evidence" value="ECO:0007669"/>
    <property type="project" value="UniProtKB-SubCell"/>
</dbReference>
<dbReference type="GO" id="GO:0022900">
    <property type="term" value="P:electron transport chain"/>
    <property type="evidence" value="ECO:0007669"/>
    <property type="project" value="UniProtKB-UniRule"/>
</dbReference>
<dbReference type="HAMAP" id="MF_00459">
    <property type="entry name" value="RsxA_RnfA"/>
    <property type="match status" value="1"/>
</dbReference>
<dbReference type="InterPro" id="IPR011293">
    <property type="entry name" value="Ion_transpt_RnfA/RsxA"/>
</dbReference>
<dbReference type="InterPro" id="IPR003667">
    <property type="entry name" value="NqrDE/RnfAE"/>
</dbReference>
<dbReference type="InterPro" id="IPR050133">
    <property type="entry name" value="NqrDE/RnfAE_oxidrdctase"/>
</dbReference>
<dbReference type="NCBIfam" id="NF003481">
    <property type="entry name" value="PRK05151.1"/>
    <property type="match status" value="1"/>
</dbReference>
<dbReference type="NCBIfam" id="TIGR01943">
    <property type="entry name" value="rnfA"/>
    <property type="match status" value="1"/>
</dbReference>
<dbReference type="PANTHER" id="PTHR30335">
    <property type="entry name" value="INTEGRAL MEMBRANE PROTEIN OF SOXR-REDUCING COMPLEX"/>
    <property type="match status" value="1"/>
</dbReference>
<dbReference type="PANTHER" id="PTHR30335:SF0">
    <property type="entry name" value="ION-TRANSLOCATING OXIDOREDUCTASE COMPLEX SUBUNIT A"/>
    <property type="match status" value="1"/>
</dbReference>
<dbReference type="Pfam" id="PF02508">
    <property type="entry name" value="Rnf-Nqr"/>
    <property type="match status" value="1"/>
</dbReference>
<dbReference type="PIRSF" id="PIRSF006102">
    <property type="entry name" value="NQR_DE"/>
    <property type="match status" value="1"/>
</dbReference>
<accession>Q0THK0</accession>
<proteinExistence type="inferred from homology"/>
<gene>
    <name evidence="1" type="primary">rsxA</name>
    <name type="ordered locus">ECP_1572</name>
</gene>
<reference key="1">
    <citation type="journal article" date="2006" name="Mol. Microbiol.">
        <title>Role of pathogenicity island-associated integrases in the genome plasticity of uropathogenic Escherichia coli strain 536.</title>
        <authorList>
            <person name="Hochhut B."/>
            <person name="Wilde C."/>
            <person name="Balling G."/>
            <person name="Middendorf B."/>
            <person name="Dobrindt U."/>
            <person name="Brzuszkiewicz E."/>
            <person name="Gottschalk G."/>
            <person name="Carniel E."/>
            <person name="Hacker J."/>
        </authorList>
    </citation>
    <scope>NUCLEOTIDE SEQUENCE [LARGE SCALE GENOMIC DNA]</scope>
    <source>
        <strain>536 / UPEC</strain>
    </source>
</reference>
<name>RSXA_ECOL5</name>
<sequence>MTDYLLLFVGTVLVNNFVLVKFLGLCPFMGVSKKLETAMGMGLATTFVMTLASICAWLIDTWILIPLNLIYLRTLAFILVIAVVVQFTEMVVRKTSPVLYRLLGIFLPLITTNCAVLGVALLNINLGHNFLQSALYGFSAAVGFSLVMVLFAAIRERLAVADVPAPFRGNAIALITAGLMSLAFMGFSGLVKL</sequence>
<comment type="function">
    <text evidence="1">Part of a membrane-bound complex that couples electron transfer with translocation of ions across the membrane. Required to maintain the reduced state of SoxR.</text>
</comment>
<comment type="subunit">
    <text evidence="1">The complex is composed of six subunits: RsxA, RsxB, RsxC, RsxD, RsxE and RsxG.</text>
</comment>
<comment type="subcellular location">
    <subcellularLocation>
        <location evidence="1">Cell inner membrane</location>
        <topology evidence="1">Multi-pass membrane protein</topology>
    </subcellularLocation>
</comment>
<comment type="similarity">
    <text evidence="1">Belongs to the NqrDE/RnfAE family.</text>
</comment>
<feature type="chain" id="PRO_1000013526" description="Ion-translocating oxidoreductase complex subunit A">
    <location>
        <begin position="1"/>
        <end position="193"/>
    </location>
</feature>
<feature type="transmembrane region" description="Helical" evidence="1">
    <location>
        <begin position="5"/>
        <end position="25"/>
    </location>
</feature>
<feature type="transmembrane region" description="Helical" evidence="1">
    <location>
        <begin position="39"/>
        <end position="59"/>
    </location>
</feature>
<feature type="transmembrane region" description="Helical" evidence="1">
    <location>
        <begin position="63"/>
        <end position="83"/>
    </location>
</feature>
<feature type="transmembrane region" description="Helical" evidence="1">
    <location>
        <begin position="102"/>
        <end position="122"/>
    </location>
</feature>
<feature type="transmembrane region" description="Helical" evidence="1">
    <location>
        <begin position="134"/>
        <end position="154"/>
    </location>
</feature>
<feature type="transmembrane region" description="Helical" evidence="1">
    <location>
        <begin position="171"/>
        <end position="191"/>
    </location>
</feature>
<keyword id="KW-0997">Cell inner membrane</keyword>
<keyword id="KW-1003">Cell membrane</keyword>
<keyword id="KW-0249">Electron transport</keyword>
<keyword id="KW-0472">Membrane</keyword>
<keyword id="KW-1278">Translocase</keyword>
<keyword id="KW-0812">Transmembrane</keyword>
<keyword id="KW-1133">Transmembrane helix</keyword>
<keyword id="KW-0813">Transport</keyword>
<evidence type="ECO:0000255" key="1">
    <source>
        <dbReference type="HAMAP-Rule" id="MF_00459"/>
    </source>
</evidence>